<sequence length="185" mass="20833">MISAGDLRKGVTFEFDGQVFTVTDFLHVKPGKGAAFVRTKLRNVISGGVVDRTFNPTEKLQEAVIERKEMQYLYSDGELYYFMDQETFEQIPLNAEKVEDAIKYLKENMFAVIKFFKGSAFSVEAPNFVELQITYTEPGVKGNTATNSLKPATVETGAIINVPMFVNDGDVIRIDTRTGEYMERV</sequence>
<reference key="1">
    <citation type="submission" date="2008-04" db="EMBL/GenBank/DDBJ databases">
        <title>Complete sequence of Clostridium botulinum strain Eklund.</title>
        <authorList>
            <person name="Brinkac L.M."/>
            <person name="Brown J.L."/>
            <person name="Bruce D."/>
            <person name="Detter C."/>
            <person name="Munk C."/>
            <person name="Smith L.A."/>
            <person name="Smith T.J."/>
            <person name="Sutton G."/>
            <person name="Brettin T.S."/>
        </authorList>
    </citation>
    <scope>NUCLEOTIDE SEQUENCE [LARGE SCALE GENOMIC DNA]</scope>
    <source>
        <strain>Eklund 17B / Type B</strain>
    </source>
</reference>
<feature type="chain" id="PRO_1000096138" description="Elongation factor P">
    <location>
        <begin position="1"/>
        <end position="185"/>
    </location>
</feature>
<gene>
    <name evidence="1" type="primary">efp</name>
    <name type="ordered locus">CLL_A2417</name>
</gene>
<evidence type="ECO:0000255" key="1">
    <source>
        <dbReference type="HAMAP-Rule" id="MF_00141"/>
    </source>
</evidence>
<keyword id="KW-0963">Cytoplasm</keyword>
<keyword id="KW-0251">Elongation factor</keyword>
<keyword id="KW-0648">Protein biosynthesis</keyword>
<accession>B2TRQ5</accession>
<organism>
    <name type="scientific">Clostridium botulinum (strain Eklund 17B / Type B)</name>
    <dbReference type="NCBI Taxonomy" id="935198"/>
    <lineage>
        <taxon>Bacteria</taxon>
        <taxon>Bacillati</taxon>
        <taxon>Bacillota</taxon>
        <taxon>Clostridia</taxon>
        <taxon>Eubacteriales</taxon>
        <taxon>Clostridiaceae</taxon>
        <taxon>Clostridium</taxon>
    </lineage>
</organism>
<proteinExistence type="inferred from homology"/>
<name>EFP_CLOBB</name>
<protein>
    <recommendedName>
        <fullName evidence="1">Elongation factor P</fullName>
        <shortName evidence="1">EF-P</shortName>
    </recommendedName>
</protein>
<dbReference type="EMBL" id="CP001056">
    <property type="protein sequence ID" value="ACD24198.1"/>
    <property type="molecule type" value="Genomic_DNA"/>
</dbReference>
<dbReference type="SMR" id="B2TRQ5"/>
<dbReference type="KEGG" id="cbk:CLL_A2417"/>
<dbReference type="HOGENOM" id="CLU_074944_0_1_9"/>
<dbReference type="UniPathway" id="UPA00345"/>
<dbReference type="Proteomes" id="UP000001195">
    <property type="component" value="Chromosome"/>
</dbReference>
<dbReference type="GO" id="GO:0005737">
    <property type="term" value="C:cytoplasm"/>
    <property type="evidence" value="ECO:0007669"/>
    <property type="project" value="UniProtKB-SubCell"/>
</dbReference>
<dbReference type="GO" id="GO:0003746">
    <property type="term" value="F:translation elongation factor activity"/>
    <property type="evidence" value="ECO:0007669"/>
    <property type="project" value="UniProtKB-UniRule"/>
</dbReference>
<dbReference type="GO" id="GO:0043043">
    <property type="term" value="P:peptide biosynthetic process"/>
    <property type="evidence" value="ECO:0007669"/>
    <property type="project" value="InterPro"/>
</dbReference>
<dbReference type="CDD" id="cd04470">
    <property type="entry name" value="S1_EF-P_repeat_1"/>
    <property type="match status" value="1"/>
</dbReference>
<dbReference type="CDD" id="cd05794">
    <property type="entry name" value="S1_EF-P_repeat_2"/>
    <property type="match status" value="1"/>
</dbReference>
<dbReference type="FunFam" id="2.30.30.30:FF:000003">
    <property type="entry name" value="Elongation factor P"/>
    <property type="match status" value="1"/>
</dbReference>
<dbReference type="FunFam" id="2.40.50.140:FF:000004">
    <property type="entry name" value="Elongation factor P"/>
    <property type="match status" value="1"/>
</dbReference>
<dbReference type="FunFam" id="2.40.50.140:FF:000009">
    <property type="entry name" value="Elongation factor P"/>
    <property type="match status" value="1"/>
</dbReference>
<dbReference type="Gene3D" id="2.30.30.30">
    <property type="match status" value="1"/>
</dbReference>
<dbReference type="Gene3D" id="2.40.50.140">
    <property type="entry name" value="Nucleic acid-binding proteins"/>
    <property type="match status" value="2"/>
</dbReference>
<dbReference type="HAMAP" id="MF_00141">
    <property type="entry name" value="EF_P"/>
    <property type="match status" value="1"/>
</dbReference>
<dbReference type="InterPro" id="IPR015365">
    <property type="entry name" value="Elong-fact-P_C"/>
</dbReference>
<dbReference type="InterPro" id="IPR012340">
    <property type="entry name" value="NA-bd_OB-fold"/>
</dbReference>
<dbReference type="InterPro" id="IPR014722">
    <property type="entry name" value="Rib_uL2_dom2"/>
</dbReference>
<dbReference type="InterPro" id="IPR020599">
    <property type="entry name" value="Transl_elong_fac_P/YeiP"/>
</dbReference>
<dbReference type="InterPro" id="IPR013185">
    <property type="entry name" value="Transl_elong_KOW-like"/>
</dbReference>
<dbReference type="InterPro" id="IPR001059">
    <property type="entry name" value="Transl_elong_P/YeiP_cen"/>
</dbReference>
<dbReference type="InterPro" id="IPR013852">
    <property type="entry name" value="Transl_elong_P/YeiP_CS"/>
</dbReference>
<dbReference type="InterPro" id="IPR011768">
    <property type="entry name" value="Transl_elongation_fac_P"/>
</dbReference>
<dbReference type="InterPro" id="IPR008991">
    <property type="entry name" value="Translation_prot_SH3-like_sf"/>
</dbReference>
<dbReference type="NCBIfam" id="TIGR00038">
    <property type="entry name" value="efp"/>
    <property type="match status" value="1"/>
</dbReference>
<dbReference type="NCBIfam" id="NF001810">
    <property type="entry name" value="PRK00529.1"/>
    <property type="match status" value="1"/>
</dbReference>
<dbReference type="PANTHER" id="PTHR30053">
    <property type="entry name" value="ELONGATION FACTOR P"/>
    <property type="match status" value="1"/>
</dbReference>
<dbReference type="PANTHER" id="PTHR30053:SF12">
    <property type="entry name" value="ELONGATION FACTOR P (EF-P) FAMILY PROTEIN"/>
    <property type="match status" value="1"/>
</dbReference>
<dbReference type="Pfam" id="PF01132">
    <property type="entry name" value="EFP"/>
    <property type="match status" value="1"/>
</dbReference>
<dbReference type="Pfam" id="PF08207">
    <property type="entry name" value="EFP_N"/>
    <property type="match status" value="1"/>
</dbReference>
<dbReference type="Pfam" id="PF09285">
    <property type="entry name" value="Elong-fact-P_C"/>
    <property type="match status" value="1"/>
</dbReference>
<dbReference type="PIRSF" id="PIRSF005901">
    <property type="entry name" value="EF-P"/>
    <property type="match status" value="1"/>
</dbReference>
<dbReference type="SMART" id="SM01185">
    <property type="entry name" value="EFP"/>
    <property type="match status" value="1"/>
</dbReference>
<dbReference type="SMART" id="SM00841">
    <property type="entry name" value="Elong-fact-P_C"/>
    <property type="match status" value="1"/>
</dbReference>
<dbReference type="SUPFAM" id="SSF50249">
    <property type="entry name" value="Nucleic acid-binding proteins"/>
    <property type="match status" value="2"/>
</dbReference>
<dbReference type="SUPFAM" id="SSF50104">
    <property type="entry name" value="Translation proteins SH3-like domain"/>
    <property type="match status" value="1"/>
</dbReference>
<dbReference type="PROSITE" id="PS01275">
    <property type="entry name" value="EFP"/>
    <property type="match status" value="1"/>
</dbReference>
<comment type="function">
    <text evidence="1">Involved in peptide bond synthesis. Stimulates efficient translation and peptide-bond synthesis on native or reconstituted 70S ribosomes in vitro. Probably functions indirectly by altering the affinity of the ribosome for aminoacyl-tRNA, thus increasing their reactivity as acceptors for peptidyl transferase.</text>
</comment>
<comment type="pathway">
    <text evidence="1">Protein biosynthesis; polypeptide chain elongation.</text>
</comment>
<comment type="subcellular location">
    <subcellularLocation>
        <location evidence="1">Cytoplasm</location>
    </subcellularLocation>
</comment>
<comment type="similarity">
    <text evidence="1">Belongs to the elongation factor P family.</text>
</comment>